<organism>
    <name type="scientific">Methanocaldococcus jannaschii (strain ATCC 43067 / DSM 2661 / JAL-1 / JCM 10045 / NBRC 100440)</name>
    <name type="common">Methanococcus jannaschii</name>
    <dbReference type="NCBI Taxonomy" id="243232"/>
    <lineage>
        <taxon>Archaea</taxon>
        <taxon>Methanobacteriati</taxon>
        <taxon>Methanobacteriota</taxon>
        <taxon>Methanomada group</taxon>
        <taxon>Methanococci</taxon>
        <taxon>Methanococcales</taxon>
        <taxon>Methanocaldococcaceae</taxon>
        <taxon>Methanocaldococcus</taxon>
    </lineage>
</organism>
<feature type="chain" id="PRO_0000106883" description="Uncharacterized protein MJ0453">
    <location>
        <begin position="1"/>
        <end position="107"/>
    </location>
</feature>
<feature type="region of interest" description="Disordered" evidence="1">
    <location>
        <begin position="88"/>
        <end position="107"/>
    </location>
</feature>
<feature type="compositionally biased region" description="Basic and acidic residues" evidence="1">
    <location>
        <begin position="88"/>
        <end position="97"/>
    </location>
</feature>
<feature type="compositionally biased region" description="Basic residues" evidence="1">
    <location>
        <begin position="98"/>
        <end position="107"/>
    </location>
</feature>
<gene>
    <name type="ordered locus">MJ0453</name>
</gene>
<keyword id="KW-1185">Reference proteome</keyword>
<dbReference type="EMBL" id="L77117">
    <property type="protein sequence ID" value="AAB98442.1"/>
    <property type="molecule type" value="Genomic_DNA"/>
</dbReference>
<dbReference type="PIR" id="E64356">
    <property type="entry name" value="E64356"/>
</dbReference>
<dbReference type="RefSeq" id="WP_010869952.1">
    <property type="nucleotide sequence ID" value="NC_000909.1"/>
</dbReference>
<dbReference type="SMR" id="Q57895"/>
<dbReference type="FunCoup" id="Q57895">
    <property type="interactions" value="3"/>
</dbReference>
<dbReference type="STRING" id="243232.MJ_0453"/>
<dbReference type="PaxDb" id="243232-MJ_0453"/>
<dbReference type="EnsemblBacteria" id="AAB98442">
    <property type="protein sequence ID" value="AAB98442"/>
    <property type="gene ID" value="MJ_0453"/>
</dbReference>
<dbReference type="GeneID" id="1451314"/>
<dbReference type="KEGG" id="mja:MJ_0453"/>
<dbReference type="eggNOG" id="arCOG04844">
    <property type="taxonomic scope" value="Archaea"/>
</dbReference>
<dbReference type="HOGENOM" id="CLU_159086_1_0_2"/>
<dbReference type="InParanoid" id="Q57895"/>
<dbReference type="OrthoDB" id="109565at2157"/>
<dbReference type="PhylomeDB" id="Q57895"/>
<dbReference type="Proteomes" id="UP000000805">
    <property type="component" value="Chromosome"/>
</dbReference>
<dbReference type="InterPro" id="IPR012031">
    <property type="entry name" value="MTH0776-like"/>
</dbReference>
<dbReference type="Pfam" id="PF08979">
    <property type="entry name" value="DUF1894"/>
    <property type="match status" value="1"/>
</dbReference>
<dbReference type="PIRSF" id="PIRSF006577">
    <property type="entry name" value="UCP006577"/>
    <property type="match status" value="1"/>
</dbReference>
<evidence type="ECO:0000256" key="1">
    <source>
        <dbReference type="SAM" id="MobiDB-lite"/>
    </source>
</evidence>
<reference key="1">
    <citation type="journal article" date="1996" name="Science">
        <title>Complete genome sequence of the methanogenic archaeon, Methanococcus jannaschii.</title>
        <authorList>
            <person name="Bult C.J."/>
            <person name="White O."/>
            <person name="Olsen G.J."/>
            <person name="Zhou L."/>
            <person name="Fleischmann R.D."/>
            <person name="Sutton G.G."/>
            <person name="Blake J.A."/>
            <person name="FitzGerald L.M."/>
            <person name="Clayton R.A."/>
            <person name="Gocayne J.D."/>
            <person name="Kerlavage A.R."/>
            <person name="Dougherty B.A."/>
            <person name="Tomb J.-F."/>
            <person name="Adams M.D."/>
            <person name="Reich C.I."/>
            <person name="Overbeek R."/>
            <person name="Kirkness E.F."/>
            <person name="Weinstock K.G."/>
            <person name="Merrick J.M."/>
            <person name="Glodek A."/>
            <person name="Scott J.L."/>
            <person name="Geoghagen N.S.M."/>
            <person name="Weidman J.F."/>
            <person name="Fuhrmann J.L."/>
            <person name="Nguyen D."/>
            <person name="Utterback T.R."/>
            <person name="Kelley J.M."/>
            <person name="Peterson J.D."/>
            <person name="Sadow P.W."/>
            <person name="Hanna M.C."/>
            <person name="Cotton M.D."/>
            <person name="Roberts K.M."/>
            <person name="Hurst M.A."/>
            <person name="Kaine B.P."/>
            <person name="Borodovsky M."/>
            <person name="Klenk H.-P."/>
            <person name="Fraser C.M."/>
            <person name="Smith H.O."/>
            <person name="Woese C.R."/>
            <person name="Venter J.C."/>
        </authorList>
    </citation>
    <scope>NUCLEOTIDE SEQUENCE [LARGE SCALE GENOMIC DNA]</scope>
    <source>
        <strain>ATCC 43067 / DSM 2661 / JAL-1 / JCM 10045 / NBRC 100440</strain>
    </source>
</reference>
<sequence length="107" mass="12603">MGCIDKLNYEILYKGGFKECAEYIRKNFKNIKEMEAGYEIFEGIFLIGIPPIPVAYEDNYVIFPYTKPCYGTFVLKINLDEINKDKKEEKKEKDKGKKGLLSRLKFW</sequence>
<proteinExistence type="predicted"/>
<protein>
    <recommendedName>
        <fullName>Uncharacterized protein MJ0453</fullName>
    </recommendedName>
</protein>
<name>Y453_METJA</name>
<accession>Q57895</accession>